<accession>Q1LZ83</accession>
<organism>
    <name type="scientific">Bos taurus</name>
    <name type="common">Bovine</name>
    <dbReference type="NCBI Taxonomy" id="9913"/>
    <lineage>
        <taxon>Eukaryota</taxon>
        <taxon>Metazoa</taxon>
        <taxon>Chordata</taxon>
        <taxon>Craniata</taxon>
        <taxon>Vertebrata</taxon>
        <taxon>Euteleostomi</taxon>
        <taxon>Mammalia</taxon>
        <taxon>Eutheria</taxon>
        <taxon>Laurasiatheria</taxon>
        <taxon>Artiodactyla</taxon>
        <taxon>Ruminantia</taxon>
        <taxon>Pecora</taxon>
        <taxon>Bovidae</taxon>
        <taxon>Bovinae</taxon>
        <taxon>Bos</taxon>
    </lineage>
</organism>
<sequence length="288" mass="32683">MAATLQRIERLSSRVIRVLGCNPGPMTLQGTNTYLVGTGPRRILIDTGEPSIPEYISCLKQALTEFNTAIQEIIVTHWHRDHTGGIGDICKSINNDTTYCVKKLPRNPERKEIIGNGEQQYVYVKDGDIIKTEGATLRVVYTPGHTDDHMALVLEEENALFSGDCILGEGTTVFEDLYDYMNSLKELLKIKAKVIYPGHGPVIHNAEAKILQYISHRNIREQQILTVFHENFEKSFTAMELVKSIYKDTPEHLHKMAQHNVLLHLKKLEKEGKIVSNTDPEKKWKAHL</sequence>
<proteinExistence type="evidence at transcript level"/>
<feature type="chain" id="PRO_0000315742" description="Endoribonuclease LACTB2">
    <location>
        <begin position="1"/>
        <end position="288"/>
    </location>
</feature>
<feature type="binding site" evidence="1">
    <location>
        <position position="77"/>
    </location>
    <ligand>
        <name>Zn(2+)</name>
        <dbReference type="ChEBI" id="CHEBI:29105"/>
        <label>1</label>
    </ligand>
</feature>
<feature type="binding site" evidence="1">
    <location>
        <position position="79"/>
    </location>
    <ligand>
        <name>Zn(2+)</name>
        <dbReference type="ChEBI" id="CHEBI:29105"/>
        <label>1</label>
    </ligand>
</feature>
<feature type="binding site" evidence="1">
    <location>
        <position position="81"/>
    </location>
    <ligand>
        <name>Zn(2+)</name>
        <dbReference type="ChEBI" id="CHEBI:29105"/>
        <label>2</label>
    </ligand>
</feature>
<feature type="binding site" evidence="1">
    <location>
        <position position="82"/>
    </location>
    <ligand>
        <name>Zn(2+)</name>
        <dbReference type="ChEBI" id="CHEBI:29105"/>
        <label>2</label>
    </ligand>
</feature>
<feature type="binding site" evidence="1">
    <location>
        <position position="118"/>
    </location>
    <ligand>
        <name>Zn(2+)</name>
        <dbReference type="ChEBI" id="CHEBI:29105"/>
        <label>1</label>
    </ligand>
</feature>
<feature type="binding site" evidence="1">
    <location>
        <position position="118"/>
    </location>
    <ligand>
        <name>Zn(2+)</name>
        <dbReference type="ChEBI" id="CHEBI:29105"/>
        <label>2</label>
    </ligand>
</feature>
<feature type="binding site" evidence="1">
    <location>
        <position position="145"/>
    </location>
    <ligand>
        <name>Zn(2+)</name>
        <dbReference type="ChEBI" id="CHEBI:29105"/>
        <label>1</label>
    </ligand>
</feature>
<feature type="binding site" evidence="1">
    <location>
        <position position="164"/>
    </location>
    <ligand>
        <name>Zn(2+)</name>
        <dbReference type="ChEBI" id="CHEBI:29105"/>
        <label>1</label>
    </ligand>
</feature>
<feature type="binding site" evidence="1">
    <location>
        <position position="164"/>
    </location>
    <ligand>
        <name>Zn(2+)</name>
        <dbReference type="ChEBI" id="CHEBI:29105"/>
        <label>2</label>
    </ligand>
</feature>
<feature type="binding site" evidence="1">
    <location>
        <position position="199"/>
    </location>
    <ligand>
        <name>Zn(2+)</name>
        <dbReference type="ChEBI" id="CHEBI:29105"/>
        <label>2</label>
    </ligand>
</feature>
<feature type="modified residue" description="N6-acetyllysine" evidence="2">
    <location>
        <position position="102"/>
    </location>
</feature>
<feature type="modified residue" description="Phosphoserine" evidence="2">
    <location>
        <position position="235"/>
    </location>
</feature>
<feature type="modified residue" description="N6-succinyllysine" evidence="2">
    <location>
        <position position="273"/>
    </location>
</feature>
<feature type="modified residue" description="N6-acetyllysine" evidence="2">
    <location>
        <position position="282"/>
    </location>
</feature>
<comment type="function">
    <text evidence="1">Endoribonuclease; cleaves preferentially 3' to purine-pyrimidine dinucleotide motifs in single-stranded RNA. The cleavage product contains a free 3' -OH group. Has no activity with double-stranded RNA or DNA. Required for normal mitochondrial function and cell viability.</text>
</comment>
<comment type="cofactor">
    <cofactor evidence="1">
        <name>Zn(2+)</name>
        <dbReference type="ChEBI" id="CHEBI:29105"/>
    </cofactor>
    <text evidence="1">Binds 2 Zn(2+) ions per subunit.</text>
</comment>
<comment type="subunit">
    <text evidence="1">Monomer.</text>
</comment>
<comment type="subcellular location">
    <subcellularLocation>
        <location evidence="1">Mitochondrion matrix</location>
    </subcellularLocation>
</comment>
<comment type="similarity">
    <text evidence="3">Belongs to the metallo-beta-lactamase superfamily. Glyoxalase II family.</text>
</comment>
<protein>
    <recommendedName>
        <fullName evidence="1">Endoribonuclease LACTB2</fullName>
    </recommendedName>
    <alternativeName>
        <fullName>Beta-lactamase-like protein 2</fullName>
        <ecNumber evidence="1">3.1.27.-</ecNumber>
    </alternativeName>
</protein>
<gene>
    <name type="primary">LACTB2</name>
</gene>
<dbReference type="EC" id="3.1.27.-" evidence="1"/>
<dbReference type="EMBL" id="BC116149">
    <property type="protein sequence ID" value="AAI16150.1"/>
    <property type="molecule type" value="mRNA"/>
</dbReference>
<dbReference type="RefSeq" id="NP_001069513.1">
    <property type="nucleotide sequence ID" value="NM_001076045.2"/>
</dbReference>
<dbReference type="SMR" id="Q1LZ83"/>
<dbReference type="FunCoup" id="Q1LZ83">
    <property type="interactions" value="2217"/>
</dbReference>
<dbReference type="STRING" id="9913.ENSBTAP00000002364"/>
<dbReference type="PaxDb" id="9913-ENSBTAP00000002364"/>
<dbReference type="Ensembl" id="ENSBTAT00000002364.7">
    <property type="protein sequence ID" value="ENSBTAP00000002364.5"/>
    <property type="gene ID" value="ENSBTAG00000001808.7"/>
</dbReference>
<dbReference type="GeneID" id="535021"/>
<dbReference type="KEGG" id="bta:535021"/>
<dbReference type="CTD" id="51110"/>
<dbReference type="VEuPathDB" id="HostDB:ENSBTAG00000001808"/>
<dbReference type="VGNC" id="VGNC:30765">
    <property type="gene designation" value="LACTB2"/>
</dbReference>
<dbReference type="eggNOG" id="KOG0813">
    <property type="taxonomic scope" value="Eukaryota"/>
</dbReference>
<dbReference type="GeneTree" id="ENSGT00390000001710"/>
<dbReference type="HOGENOM" id="CLU_048478_1_2_1"/>
<dbReference type="InParanoid" id="Q1LZ83"/>
<dbReference type="OMA" id="GDHVMAW"/>
<dbReference type="OrthoDB" id="17458at2759"/>
<dbReference type="TreeFam" id="TF314297"/>
<dbReference type="Proteomes" id="UP000009136">
    <property type="component" value="Chromosome 14"/>
</dbReference>
<dbReference type="Bgee" id="ENSBTAG00000001808">
    <property type="expression patterns" value="Expressed in spermatocyte and 104 other cell types or tissues"/>
</dbReference>
<dbReference type="GO" id="GO:0005759">
    <property type="term" value="C:mitochondrial matrix"/>
    <property type="evidence" value="ECO:0000250"/>
    <property type="project" value="UniProtKB"/>
</dbReference>
<dbReference type="GO" id="GO:0004521">
    <property type="term" value="F:RNA endonuclease activity"/>
    <property type="evidence" value="ECO:0000250"/>
    <property type="project" value="UniProtKB"/>
</dbReference>
<dbReference type="GO" id="GO:0003727">
    <property type="term" value="F:single-stranded RNA binding"/>
    <property type="evidence" value="ECO:0000250"/>
    <property type="project" value="UniProtKB"/>
</dbReference>
<dbReference type="GO" id="GO:0008270">
    <property type="term" value="F:zinc ion binding"/>
    <property type="evidence" value="ECO:0000250"/>
    <property type="project" value="UniProtKB"/>
</dbReference>
<dbReference type="CDD" id="cd07722">
    <property type="entry name" value="LACTB2-like_MBL-fold"/>
    <property type="match status" value="1"/>
</dbReference>
<dbReference type="FunFam" id="1.10.10.10:FF:000328">
    <property type="entry name" value="Lactamase beta 2"/>
    <property type="match status" value="1"/>
</dbReference>
<dbReference type="FunFam" id="3.60.15.10:FF:000017">
    <property type="entry name" value="Lactamase beta 2"/>
    <property type="match status" value="1"/>
</dbReference>
<dbReference type="Gene3D" id="3.60.15.10">
    <property type="entry name" value="Ribonuclease Z/Hydroxyacylglutathione hydrolase-like"/>
    <property type="match status" value="1"/>
</dbReference>
<dbReference type="Gene3D" id="1.10.10.10">
    <property type="entry name" value="Winged helix-like DNA-binding domain superfamily/Winged helix DNA-binding domain"/>
    <property type="match status" value="1"/>
</dbReference>
<dbReference type="InterPro" id="IPR047921">
    <property type="entry name" value="LACTB2-like_MBL-fold"/>
</dbReference>
<dbReference type="InterPro" id="IPR041516">
    <property type="entry name" value="LACTB2_WH"/>
</dbReference>
<dbReference type="InterPro" id="IPR001279">
    <property type="entry name" value="Metallo-B-lactamas"/>
</dbReference>
<dbReference type="InterPro" id="IPR036866">
    <property type="entry name" value="RibonucZ/Hydroxyglut_hydro"/>
</dbReference>
<dbReference type="InterPro" id="IPR050662">
    <property type="entry name" value="Sec-metab_biosynth-thioest"/>
</dbReference>
<dbReference type="InterPro" id="IPR036388">
    <property type="entry name" value="WH-like_DNA-bd_sf"/>
</dbReference>
<dbReference type="PANTHER" id="PTHR23131">
    <property type="entry name" value="ENDORIBONUCLEASE LACTB2"/>
    <property type="match status" value="1"/>
</dbReference>
<dbReference type="PANTHER" id="PTHR23131:SF0">
    <property type="entry name" value="ENDORIBONUCLEASE LACTB2"/>
    <property type="match status" value="1"/>
</dbReference>
<dbReference type="Pfam" id="PF17778">
    <property type="entry name" value="BLACT_WH"/>
    <property type="match status" value="1"/>
</dbReference>
<dbReference type="Pfam" id="PF00753">
    <property type="entry name" value="Lactamase_B"/>
    <property type="match status" value="1"/>
</dbReference>
<dbReference type="SMART" id="SM00849">
    <property type="entry name" value="Lactamase_B"/>
    <property type="match status" value="1"/>
</dbReference>
<dbReference type="SUPFAM" id="SSF56281">
    <property type="entry name" value="Metallo-hydrolase/oxidoreductase"/>
    <property type="match status" value="1"/>
</dbReference>
<keyword id="KW-0007">Acetylation</keyword>
<keyword id="KW-0255">Endonuclease</keyword>
<keyword id="KW-0378">Hydrolase</keyword>
<keyword id="KW-0479">Metal-binding</keyword>
<keyword id="KW-0496">Mitochondrion</keyword>
<keyword id="KW-0540">Nuclease</keyword>
<keyword id="KW-0597">Phosphoprotein</keyword>
<keyword id="KW-1185">Reference proteome</keyword>
<keyword id="KW-0694">RNA-binding</keyword>
<keyword id="KW-0862">Zinc</keyword>
<reference key="1">
    <citation type="submission" date="2006-05" db="EMBL/GenBank/DDBJ databases">
        <authorList>
            <consortium name="NIH - Mammalian Gene Collection (MGC) project"/>
        </authorList>
    </citation>
    <scope>NUCLEOTIDE SEQUENCE [LARGE SCALE MRNA]</scope>
    <source>
        <strain>Hereford</strain>
        <tissue>Fetal pons</tissue>
    </source>
</reference>
<evidence type="ECO:0000250" key="1">
    <source>
        <dbReference type="UniProtKB" id="Q53H82"/>
    </source>
</evidence>
<evidence type="ECO:0000250" key="2">
    <source>
        <dbReference type="UniProtKB" id="Q99KR3"/>
    </source>
</evidence>
<evidence type="ECO:0000305" key="3"/>
<name>LACB2_BOVIN</name>